<protein>
    <recommendedName>
        <fullName>Uncharacterized protein MJ0690</fullName>
    </recommendedName>
</protein>
<accession>Q58102</accession>
<keyword id="KW-0002">3D-structure</keyword>
<keyword id="KW-1185">Reference proteome</keyword>
<proteinExistence type="evidence at protein level"/>
<gene>
    <name type="ordered locus">MJ0690</name>
</gene>
<dbReference type="EMBL" id="L77117">
    <property type="protein sequence ID" value="AAB98685.1"/>
    <property type="molecule type" value="Genomic_DNA"/>
</dbReference>
<dbReference type="PIR" id="B64386">
    <property type="entry name" value="B64386"/>
</dbReference>
<dbReference type="PDB" id="3K32">
    <property type="method" value="X-ray"/>
    <property type="resolution" value="2.50 A"/>
    <property type="chains" value="A/B/C/D/E/F=1-200"/>
</dbReference>
<dbReference type="PDBsum" id="3K32"/>
<dbReference type="SMR" id="Q58102"/>
<dbReference type="STRING" id="243232.MJ_0690"/>
<dbReference type="PaxDb" id="243232-MJ_0690"/>
<dbReference type="DNASU" id="1451556"/>
<dbReference type="EnsemblBacteria" id="AAB98685">
    <property type="protein sequence ID" value="AAB98685"/>
    <property type="gene ID" value="MJ_0690"/>
</dbReference>
<dbReference type="KEGG" id="mja:MJ_0690"/>
<dbReference type="eggNOG" id="arCOG00037">
    <property type="taxonomic scope" value="Archaea"/>
</dbReference>
<dbReference type="HOGENOM" id="CLU_1381418_0_0_2"/>
<dbReference type="InParanoid" id="Q58102"/>
<dbReference type="PhylomeDB" id="Q58102"/>
<dbReference type="EvolutionaryTrace" id="Q58102"/>
<dbReference type="Proteomes" id="UP000000805">
    <property type="component" value="Chromosome"/>
</dbReference>
<dbReference type="Gene3D" id="3.40.50.620">
    <property type="entry name" value="HUPs"/>
    <property type="match status" value="1"/>
</dbReference>
<dbReference type="InterPro" id="IPR055834">
    <property type="entry name" value="DUF7411"/>
</dbReference>
<dbReference type="InterPro" id="IPR014729">
    <property type="entry name" value="Rossmann-like_a/b/a_fold"/>
</dbReference>
<dbReference type="NCBIfam" id="NF011155">
    <property type="entry name" value="PRK14561.1"/>
    <property type="match status" value="1"/>
</dbReference>
<dbReference type="Pfam" id="PF24167">
    <property type="entry name" value="DUF7411"/>
    <property type="match status" value="1"/>
</dbReference>
<dbReference type="SUPFAM" id="SSF52402">
    <property type="entry name" value="Adenine nucleotide alpha hydrolases-like"/>
    <property type="match status" value="1"/>
</dbReference>
<reference key="1">
    <citation type="journal article" date="1996" name="Science">
        <title>Complete genome sequence of the methanogenic archaeon, Methanococcus jannaschii.</title>
        <authorList>
            <person name="Bult C.J."/>
            <person name="White O."/>
            <person name="Olsen G.J."/>
            <person name="Zhou L."/>
            <person name="Fleischmann R.D."/>
            <person name="Sutton G.G."/>
            <person name="Blake J.A."/>
            <person name="FitzGerald L.M."/>
            <person name="Clayton R.A."/>
            <person name="Gocayne J.D."/>
            <person name="Kerlavage A.R."/>
            <person name="Dougherty B.A."/>
            <person name="Tomb J.-F."/>
            <person name="Adams M.D."/>
            <person name="Reich C.I."/>
            <person name="Overbeek R."/>
            <person name="Kirkness E.F."/>
            <person name="Weinstock K.G."/>
            <person name="Merrick J.M."/>
            <person name="Glodek A."/>
            <person name="Scott J.L."/>
            <person name="Geoghagen N.S.M."/>
            <person name="Weidman J.F."/>
            <person name="Fuhrmann J.L."/>
            <person name="Nguyen D."/>
            <person name="Utterback T.R."/>
            <person name="Kelley J.M."/>
            <person name="Peterson J.D."/>
            <person name="Sadow P.W."/>
            <person name="Hanna M.C."/>
            <person name="Cotton M.D."/>
            <person name="Roberts K.M."/>
            <person name="Hurst M.A."/>
            <person name="Kaine B.P."/>
            <person name="Borodovsky M."/>
            <person name="Klenk H.-P."/>
            <person name="Fraser C.M."/>
            <person name="Smith H.O."/>
            <person name="Woese C.R."/>
            <person name="Venter J.C."/>
        </authorList>
    </citation>
    <scope>NUCLEOTIDE SEQUENCE [LARGE SCALE GENOMIC DNA]</scope>
    <source>
        <strain>ATCC 43067 / DSM 2661 / JAL-1 / JCM 10045 / NBRC 100440</strain>
    </source>
</reference>
<name>Y690_METJA</name>
<sequence length="200" mass="22905">MKLMDVHVLFSGGKDSSLSAVILKKLGYNPHLITINFGVIPSYKLAEETAKILGFKHKVITLDRKIVEKAADMIIEHKYPGPAIQYVHKTVLEILADEYSILADGTRRDDRVPKLSYSEIQSLEMRKNIQYITPLMGFGYKTLRHLASEFFILEEIKSGTKLSSDYEAEIRHILKERGESPEKYFPEHKQTRVVGLKKEI</sequence>
<evidence type="ECO:0007829" key="1">
    <source>
        <dbReference type="PDB" id="3K32"/>
    </source>
</evidence>
<feature type="chain" id="PRO_0000106991" description="Uncharacterized protein MJ0690">
    <location>
        <begin position="1"/>
        <end position="200"/>
    </location>
</feature>
<feature type="strand" evidence="1">
    <location>
        <begin position="4"/>
        <end position="9"/>
    </location>
</feature>
<feature type="helix" evidence="1">
    <location>
        <begin position="14"/>
        <end position="25"/>
    </location>
</feature>
<feature type="strand" evidence="1">
    <location>
        <begin position="28"/>
        <end position="36"/>
    </location>
</feature>
<feature type="strand" evidence="1">
    <location>
        <begin position="38"/>
        <end position="40"/>
    </location>
</feature>
<feature type="helix" evidence="1">
    <location>
        <begin position="44"/>
        <end position="53"/>
    </location>
</feature>
<feature type="strand" evidence="1">
    <location>
        <begin position="56"/>
        <end position="61"/>
    </location>
</feature>
<feature type="helix" evidence="1">
    <location>
        <begin position="65"/>
        <end position="77"/>
    </location>
</feature>
<feature type="strand" evidence="1">
    <location>
        <begin position="78"/>
        <end position="80"/>
    </location>
</feature>
<feature type="helix" evidence="1">
    <location>
        <begin position="81"/>
        <end position="95"/>
    </location>
</feature>
<feature type="turn" evidence="1">
    <location>
        <begin position="96"/>
        <end position="98"/>
    </location>
</feature>
<feature type="strand" evidence="1">
    <location>
        <begin position="100"/>
        <end position="103"/>
    </location>
</feature>
<feature type="helix" evidence="1">
    <location>
        <begin position="117"/>
        <end position="127"/>
    </location>
</feature>
<feature type="strand" evidence="1">
    <location>
        <begin position="130"/>
        <end position="132"/>
    </location>
</feature>
<feature type="helix" evidence="1">
    <location>
        <begin position="134"/>
        <end position="137"/>
    </location>
</feature>
<feature type="helix" evidence="1">
    <location>
        <begin position="140"/>
        <end position="150"/>
    </location>
</feature>
<feature type="strand" evidence="1">
    <location>
        <begin position="151"/>
        <end position="156"/>
    </location>
</feature>
<feature type="strand" evidence="1">
    <location>
        <begin position="158"/>
        <end position="161"/>
    </location>
</feature>
<feature type="helix" evidence="1">
    <location>
        <begin position="167"/>
        <end position="177"/>
    </location>
</feature>
<feature type="helix" evidence="1">
    <location>
        <begin position="181"/>
        <end position="183"/>
    </location>
</feature>
<feature type="strand" evidence="1">
    <location>
        <begin position="190"/>
        <end position="198"/>
    </location>
</feature>
<organism>
    <name type="scientific">Methanocaldococcus jannaschii (strain ATCC 43067 / DSM 2661 / JAL-1 / JCM 10045 / NBRC 100440)</name>
    <name type="common">Methanococcus jannaschii</name>
    <dbReference type="NCBI Taxonomy" id="243232"/>
    <lineage>
        <taxon>Archaea</taxon>
        <taxon>Methanobacteriati</taxon>
        <taxon>Methanobacteriota</taxon>
        <taxon>Methanomada group</taxon>
        <taxon>Methanococci</taxon>
        <taxon>Methanococcales</taxon>
        <taxon>Methanocaldococcaceae</taxon>
        <taxon>Methanocaldococcus</taxon>
    </lineage>
</organism>